<gene>
    <name evidence="2" type="primary">nuoB</name>
    <name type="ordered locus">Bamb_2286</name>
</gene>
<accession>Q0BDD1</accession>
<proteinExistence type="inferred from homology"/>
<feature type="chain" id="PRO_0000358363" description="NADH-quinone oxidoreductase subunit B">
    <location>
        <begin position="1"/>
        <end position="159"/>
    </location>
</feature>
<feature type="binding site" evidence="2">
    <location>
        <position position="37"/>
    </location>
    <ligand>
        <name>[4Fe-4S] cluster</name>
        <dbReference type="ChEBI" id="CHEBI:49883"/>
    </ligand>
</feature>
<feature type="binding site" evidence="2">
    <location>
        <position position="38"/>
    </location>
    <ligand>
        <name>[4Fe-4S] cluster</name>
        <dbReference type="ChEBI" id="CHEBI:49883"/>
    </ligand>
</feature>
<feature type="binding site" evidence="2">
    <location>
        <position position="102"/>
    </location>
    <ligand>
        <name>[4Fe-4S] cluster</name>
        <dbReference type="ChEBI" id="CHEBI:49883"/>
    </ligand>
</feature>
<feature type="binding site" evidence="2">
    <location>
        <position position="132"/>
    </location>
    <ligand>
        <name>[4Fe-4S] cluster</name>
        <dbReference type="ChEBI" id="CHEBI:49883"/>
    </ligand>
</feature>
<sequence length="159" mass="17560">MSIEGVLKEGFVTTTADKLINWTRTGSLWPMTFGLACCAVEMMHAGAARYDLDRFGVVFRPSPRQSDVMIVAGTLCNKMAPALRRVYDQMAEPRWVISMGSCANGGGYYHYSYSVVRGCDRIVPVDVYVPGCPPTAEALVYGVIQLQAKIRRTNTIARQ</sequence>
<dbReference type="EC" id="7.1.1.-" evidence="2"/>
<dbReference type="EMBL" id="CP000440">
    <property type="protein sequence ID" value="ABI87842.1"/>
    <property type="molecule type" value="Genomic_DNA"/>
</dbReference>
<dbReference type="RefSeq" id="WP_006398799.1">
    <property type="nucleotide sequence ID" value="NZ_CP009798.1"/>
</dbReference>
<dbReference type="SMR" id="Q0BDD1"/>
<dbReference type="KEGG" id="bam:Bamb_2286"/>
<dbReference type="PATRIC" id="fig|339670.21.peg.2641"/>
<dbReference type="eggNOG" id="COG0377">
    <property type="taxonomic scope" value="Bacteria"/>
</dbReference>
<dbReference type="Proteomes" id="UP000000662">
    <property type="component" value="Chromosome 1"/>
</dbReference>
<dbReference type="GO" id="GO:0005886">
    <property type="term" value="C:plasma membrane"/>
    <property type="evidence" value="ECO:0007669"/>
    <property type="project" value="UniProtKB-SubCell"/>
</dbReference>
<dbReference type="GO" id="GO:0045271">
    <property type="term" value="C:respiratory chain complex I"/>
    <property type="evidence" value="ECO:0007669"/>
    <property type="project" value="TreeGrafter"/>
</dbReference>
<dbReference type="GO" id="GO:0051539">
    <property type="term" value="F:4 iron, 4 sulfur cluster binding"/>
    <property type="evidence" value="ECO:0007669"/>
    <property type="project" value="UniProtKB-KW"/>
</dbReference>
<dbReference type="GO" id="GO:0005506">
    <property type="term" value="F:iron ion binding"/>
    <property type="evidence" value="ECO:0007669"/>
    <property type="project" value="UniProtKB-UniRule"/>
</dbReference>
<dbReference type="GO" id="GO:0008137">
    <property type="term" value="F:NADH dehydrogenase (ubiquinone) activity"/>
    <property type="evidence" value="ECO:0007669"/>
    <property type="project" value="InterPro"/>
</dbReference>
<dbReference type="GO" id="GO:0050136">
    <property type="term" value="F:NADH:ubiquinone reductase (non-electrogenic) activity"/>
    <property type="evidence" value="ECO:0007669"/>
    <property type="project" value="UniProtKB-UniRule"/>
</dbReference>
<dbReference type="GO" id="GO:0048038">
    <property type="term" value="F:quinone binding"/>
    <property type="evidence" value="ECO:0007669"/>
    <property type="project" value="UniProtKB-KW"/>
</dbReference>
<dbReference type="GO" id="GO:0009060">
    <property type="term" value="P:aerobic respiration"/>
    <property type="evidence" value="ECO:0007669"/>
    <property type="project" value="TreeGrafter"/>
</dbReference>
<dbReference type="GO" id="GO:0015990">
    <property type="term" value="P:electron transport coupled proton transport"/>
    <property type="evidence" value="ECO:0007669"/>
    <property type="project" value="TreeGrafter"/>
</dbReference>
<dbReference type="FunFam" id="3.40.50.12280:FF:000001">
    <property type="entry name" value="NADH-quinone oxidoreductase subunit B 2"/>
    <property type="match status" value="1"/>
</dbReference>
<dbReference type="Gene3D" id="3.40.50.12280">
    <property type="match status" value="1"/>
</dbReference>
<dbReference type="HAMAP" id="MF_01356">
    <property type="entry name" value="NDH1_NuoB"/>
    <property type="match status" value="1"/>
</dbReference>
<dbReference type="InterPro" id="IPR006137">
    <property type="entry name" value="NADH_UbQ_OxRdtase-like_20kDa"/>
</dbReference>
<dbReference type="InterPro" id="IPR006138">
    <property type="entry name" value="NADH_UQ_OxRdtase_20Kd_su"/>
</dbReference>
<dbReference type="NCBIfam" id="TIGR01957">
    <property type="entry name" value="nuoB_fam"/>
    <property type="match status" value="1"/>
</dbReference>
<dbReference type="NCBIfam" id="NF005012">
    <property type="entry name" value="PRK06411.1"/>
    <property type="match status" value="1"/>
</dbReference>
<dbReference type="PANTHER" id="PTHR11995">
    <property type="entry name" value="NADH DEHYDROGENASE"/>
    <property type="match status" value="1"/>
</dbReference>
<dbReference type="PANTHER" id="PTHR11995:SF14">
    <property type="entry name" value="NADH DEHYDROGENASE [UBIQUINONE] IRON-SULFUR PROTEIN 7, MITOCHONDRIAL"/>
    <property type="match status" value="1"/>
</dbReference>
<dbReference type="Pfam" id="PF01058">
    <property type="entry name" value="Oxidored_q6"/>
    <property type="match status" value="1"/>
</dbReference>
<dbReference type="SUPFAM" id="SSF56770">
    <property type="entry name" value="HydA/Nqo6-like"/>
    <property type="match status" value="1"/>
</dbReference>
<dbReference type="PROSITE" id="PS01150">
    <property type="entry name" value="COMPLEX1_20K"/>
    <property type="match status" value="1"/>
</dbReference>
<evidence type="ECO:0000250" key="1"/>
<evidence type="ECO:0000255" key="2">
    <source>
        <dbReference type="HAMAP-Rule" id="MF_01356"/>
    </source>
</evidence>
<keyword id="KW-0004">4Fe-4S</keyword>
<keyword id="KW-0997">Cell inner membrane</keyword>
<keyword id="KW-1003">Cell membrane</keyword>
<keyword id="KW-0408">Iron</keyword>
<keyword id="KW-0411">Iron-sulfur</keyword>
<keyword id="KW-0472">Membrane</keyword>
<keyword id="KW-0479">Metal-binding</keyword>
<keyword id="KW-0520">NAD</keyword>
<keyword id="KW-0874">Quinone</keyword>
<keyword id="KW-1278">Translocase</keyword>
<keyword id="KW-0813">Transport</keyword>
<keyword id="KW-0830">Ubiquinone</keyword>
<reference key="1">
    <citation type="submission" date="2006-08" db="EMBL/GenBank/DDBJ databases">
        <title>Complete sequence of chromosome 1 of Burkholderia cepacia AMMD.</title>
        <authorList>
            <person name="Copeland A."/>
            <person name="Lucas S."/>
            <person name="Lapidus A."/>
            <person name="Barry K."/>
            <person name="Detter J.C."/>
            <person name="Glavina del Rio T."/>
            <person name="Hammon N."/>
            <person name="Israni S."/>
            <person name="Pitluck S."/>
            <person name="Bruce D."/>
            <person name="Chain P."/>
            <person name="Malfatti S."/>
            <person name="Shin M."/>
            <person name="Vergez L."/>
            <person name="Schmutz J."/>
            <person name="Larimer F."/>
            <person name="Land M."/>
            <person name="Hauser L."/>
            <person name="Kyrpides N."/>
            <person name="Kim E."/>
            <person name="Parke J."/>
            <person name="Coenye T."/>
            <person name="Konstantinidis K."/>
            <person name="Ramette A."/>
            <person name="Tiedje J."/>
            <person name="Richardson P."/>
        </authorList>
    </citation>
    <scope>NUCLEOTIDE SEQUENCE [LARGE SCALE GENOMIC DNA]</scope>
    <source>
        <strain>ATCC BAA-244 / DSM 16087 / CCUG 44356 / LMG 19182 / AMMD</strain>
    </source>
</reference>
<organism>
    <name type="scientific">Burkholderia ambifaria (strain ATCC BAA-244 / DSM 16087 / CCUG 44356 / LMG 19182 / AMMD)</name>
    <name type="common">Burkholderia cepacia (strain AMMD)</name>
    <dbReference type="NCBI Taxonomy" id="339670"/>
    <lineage>
        <taxon>Bacteria</taxon>
        <taxon>Pseudomonadati</taxon>
        <taxon>Pseudomonadota</taxon>
        <taxon>Betaproteobacteria</taxon>
        <taxon>Burkholderiales</taxon>
        <taxon>Burkholderiaceae</taxon>
        <taxon>Burkholderia</taxon>
        <taxon>Burkholderia cepacia complex</taxon>
    </lineage>
</organism>
<name>NUOB_BURCM</name>
<comment type="function">
    <text evidence="1">NDH-1 shuttles electrons from NADH, via FMN and iron-sulfur (Fe-S) centers, to quinones in the respiratory chain. Couples the redox reaction to proton translocation (for every two electrons transferred, four hydrogen ions are translocated across the cytoplasmic membrane), and thus conserves the redox energy in a proton gradient (By similarity).</text>
</comment>
<comment type="catalytic activity">
    <reaction evidence="2">
        <text>a quinone + NADH + 5 H(+)(in) = a quinol + NAD(+) + 4 H(+)(out)</text>
        <dbReference type="Rhea" id="RHEA:57888"/>
        <dbReference type="ChEBI" id="CHEBI:15378"/>
        <dbReference type="ChEBI" id="CHEBI:24646"/>
        <dbReference type="ChEBI" id="CHEBI:57540"/>
        <dbReference type="ChEBI" id="CHEBI:57945"/>
        <dbReference type="ChEBI" id="CHEBI:132124"/>
    </reaction>
</comment>
<comment type="cofactor">
    <cofactor evidence="2">
        <name>[4Fe-4S] cluster</name>
        <dbReference type="ChEBI" id="CHEBI:49883"/>
    </cofactor>
    <text evidence="2">Binds 1 [4Fe-4S] cluster.</text>
</comment>
<comment type="subunit">
    <text evidence="2">NDH-1 is composed of 14 different subunits. Subunits NuoB, C, D, E, F, and G constitute the peripheral sector of the complex.</text>
</comment>
<comment type="subcellular location">
    <subcellularLocation>
        <location evidence="2">Cell inner membrane</location>
        <topology evidence="2">Peripheral membrane protein</topology>
        <orientation evidence="2">Cytoplasmic side</orientation>
    </subcellularLocation>
</comment>
<comment type="similarity">
    <text evidence="2">Belongs to the complex I 20 kDa subunit family.</text>
</comment>
<protein>
    <recommendedName>
        <fullName evidence="2">NADH-quinone oxidoreductase subunit B</fullName>
        <ecNumber evidence="2">7.1.1.-</ecNumber>
    </recommendedName>
    <alternativeName>
        <fullName evidence="2">NADH dehydrogenase I subunit B</fullName>
    </alternativeName>
    <alternativeName>
        <fullName evidence="2">NDH-1 subunit B</fullName>
    </alternativeName>
</protein>